<name>FLUC_CAMJR</name>
<evidence type="ECO:0000255" key="1">
    <source>
        <dbReference type="HAMAP-Rule" id="MF_00454"/>
    </source>
</evidence>
<organism>
    <name type="scientific">Campylobacter jejuni (strain RM1221)</name>
    <dbReference type="NCBI Taxonomy" id="195099"/>
    <lineage>
        <taxon>Bacteria</taxon>
        <taxon>Pseudomonadati</taxon>
        <taxon>Campylobacterota</taxon>
        <taxon>Epsilonproteobacteria</taxon>
        <taxon>Campylobacterales</taxon>
        <taxon>Campylobacteraceae</taxon>
        <taxon>Campylobacter</taxon>
    </lineage>
</organism>
<feature type="chain" id="PRO_0000110082" description="Fluoride-specific ion channel FluC">
    <location>
        <begin position="1"/>
        <end position="122"/>
    </location>
</feature>
<feature type="transmembrane region" description="Helical" evidence="1">
    <location>
        <begin position="6"/>
        <end position="26"/>
    </location>
</feature>
<feature type="transmembrane region" description="Helical" evidence="1">
    <location>
        <begin position="33"/>
        <end position="53"/>
    </location>
</feature>
<feature type="transmembrane region" description="Helical" evidence="1">
    <location>
        <begin position="60"/>
        <end position="80"/>
    </location>
</feature>
<feature type="transmembrane region" description="Helical" evidence="1">
    <location>
        <begin position="101"/>
        <end position="121"/>
    </location>
</feature>
<feature type="binding site" evidence="1">
    <location>
        <position position="75"/>
    </location>
    <ligand>
        <name>Na(+)</name>
        <dbReference type="ChEBI" id="CHEBI:29101"/>
        <note>structural</note>
    </ligand>
</feature>
<feature type="binding site" evidence="1">
    <location>
        <position position="78"/>
    </location>
    <ligand>
        <name>Na(+)</name>
        <dbReference type="ChEBI" id="CHEBI:29101"/>
        <note>structural</note>
    </ligand>
</feature>
<proteinExistence type="inferred from homology"/>
<protein>
    <recommendedName>
        <fullName evidence="1">Fluoride-specific ion channel FluC</fullName>
    </recommendedName>
</protein>
<sequence>MLNTLLVVGFGGFIGAILRMFSINLVNKFFPYSISLGTLFVNVLGSFIIGLLFSYAQNKGLSPLLKSFISTGFLGAFTTFSTFSYQNLLLLQSGNYLHFALNIILNVFLCLFAAWLGFIIFK</sequence>
<keyword id="KW-0997">Cell inner membrane</keyword>
<keyword id="KW-1003">Cell membrane</keyword>
<keyword id="KW-0407">Ion channel</keyword>
<keyword id="KW-0406">Ion transport</keyword>
<keyword id="KW-0472">Membrane</keyword>
<keyword id="KW-0479">Metal-binding</keyword>
<keyword id="KW-0915">Sodium</keyword>
<keyword id="KW-0812">Transmembrane</keyword>
<keyword id="KW-1133">Transmembrane helix</keyword>
<keyword id="KW-0813">Transport</keyword>
<accession>Q5HVP6</accession>
<gene>
    <name evidence="1" type="primary">fluC</name>
    <name evidence="1" type="synonym">crcB</name>
    <name type="ordered locus">CJE0624</name>
</gene>
<reference key="1">
    <citation type="journal article" date="2005" name="PLoS Biol.">
        <title>Major structural differences and novel potential virulence mechanisms from the genomes of multiple Campylobacter species.</title>
        <authorList>
            <person name="Fouts D.E."/>
            <person name="Mongodin E.F."/>
            <person name="Mandrell R.E."/>
            <person name="Miller W.G."/>
            <person name="Rasko D.A."/>
            <person name="Ravel J."/>
            <person name="Brinkac L.M."/>
            <person name="DeBoy R.T."/>
            <person name="Parker C.T."/>
            <person name="Daugherty S.C."/>
            <person name="Dodson R.J."/>
            <person name="Durkin A.S."/>
            <person name="Madupu R."/>
            <person name="Sullivan S.A."/>
            <person name="Shetty J.U."/>
            <person name="Ayodeji M.A."/>
            <person name="Shvartsbeyn A."/>
            <person name="Schatz M.C."/>
            <person name="Badger J.H."/>
            <person name="Fraser C.M."/>
            <person name="Nelson K.E."/>
        </authorList>
    </citation>
    <scope>NUCLEOTIDE SEQUENCE [LARGE SCALE GENOMIC DNA]</scope>
    <source>
        <strain>RM1221</strain>
    </source>
</reference>
<comment type="function">
    <text evidence="1">Fluoride-specific ion channel. Important for reducing fluoride concentration in the cell, thus reducing its toxicity.</text>
</comment>
<comment type="catalytic activity">
    <reaction evidence="1">
        <text>fluoride(in) = fluoride(out)</text>
        <dbReference type="Rhea" id="RHEA:76159"/>
        <dbReference type="ChEBI" id="CHEBI:17051"/>
    </reaction>
    <physiologicalReaction direction="left-to-right" evidence="1">
        <dbReference type="Rhea" id="RHEA:76160"/>
    </physiologicalReaction>
</comment>
<comment type="activity regulation">
    <text evidence="1">Na(+) is not transported, but it plays an essential structural role and its presence is essential for fluoride channel function.</text>
</comment>
<comment type="subcellular location">
    <subcellularLocation>
        <location evidence="1">Cell inner membrane</location>
        <topology evidence="1">Multi-pass membrane protein</topology>
    </subcellularLocation>
</comment>
<comment type="similarity">
    <text evidence="1">Belongs to the fluoride channel Fluc/FEX (TC 1.A.43) family.</text>
</comment>
<dbReference type="EMBL" id="CP000025">
    <property type="protein sequence ID" value="AAW35863.1"/>
    <property type="molecule type" value="Genomic_DNA"/>
</dbReference>
<dbReference type="RefSeq" id="WP_002859058.1">
    <property type="nucleotide sequence ID" value="NC_003912.7"/>
</dbReference>
<dbReference type="SMR" id="Q5HVP6"/>
<dbReference type="KEGG" id="cjr:CJE0624"/>
<dbReference type="HOGENOM" id="CLU_114342_3_0_7"/>
<dbReference type="GO" id="GO:0005886">
    <property type="term" value="C:plasma membrane"/>
    <property type="evidence" value="ECO:0007669"/>
    <property type="project" value="UniProtKB-SubCell"/>
</dbReference>
<dbReference type="GO" id="GO:0062054">
    <property type="term" value="F:fluoride channel activity"/>
    <property type="evidence" value="ECO:0007669"/>
    <property type="project" value="UniProtKB-UniRule"/>
</dbReference>
<dbReference type="GO" id="GO:0046872">
    <property type="term" value="F:metal ion binding"/>
    <property type="evidence" value="ECO:0007669"/>
    <property type="project" value="UniProtKB-KW"/>
</dbReference>
<dbReference type="GO" id="GO:0140114">
    <property type="term" value="P:cellular detoxification of fluoride"/>
    <property type="evidence" value="ECO:0007669"/>
    <property type="project" value="UniProtKB-UniRule"/>
</dbReference>
<dbReference type="HAMAP" id="MF_00454">
    <property type="entry name" value="FluC"/>
    <property type="match status" value="1"/>
</dbReference>
<dbReference type="InterPro" id="IPR003691">
    <property type="entry name" value="FluC"/>
</dbReference>
<dbReference type="NCBIfam" id="TIGR00494">
    <property type="entry name" value="crcB"/>
    <property type="match status" value="1"/>
</dbReference>
<dbReference type="PANTHER" id="PTHR28259">
    <property type="entry name" value="FLUORIDE EXPORT PROTEIN 1-RELATED"/>
    <property type="match status" value="1"/>
</dbReference>
<dbReference type="PANTHER" id="PTHR28259:SF1">
    <property type="entry name" value="FLUORIDE EXPORT PROTEIN 1-RELATED"/>
    <property type="match status" value="1"/>
</dbReference>
<dbReference type="Pfam" id="PF02537">
    <property type="entry name" value="CRCB"/>
    <property type="match status" value="1"/>
</dbReference>